<organism>
    <name type="scientific">Leptospira borgpetersenii serovar Hardjo-bovis (strain JB197)</name>
    <dbReference type="NCBI Taxonomy" id="355277"/>
    <lineage>
        <taxon>Bacteria</taxon>
        <taxon>Pseudomonadati</taxon>
        <taxon>Spirochaetota</taxon>
        <taxon>Spirochaetia</taxon>
        <taxon>Leptospirales</taxon>
        <taxon>Leptospiraceae</taxon>
        <taxon>Leptospira</taxon>
    </lineage>
</organism>
<name>FOLD_LEPBJ</name>
<feature type="chain" id="PRO_0000305835" description="Bifunctional protein FolD">
    <location>
        <begin position="1"/>
        <end position="284"/>
    </location>
</feature>
<feature type="binding site" evidence="1">
    <location>
        <begin position="166"/>
        <end position="168"/>
    </location>
    <ligand>
        <name>NADP(+)</name>
        <dbReference type="ChEBI" id="CHEBI:58349"/>
    </ligand>
</feature>
<feature type="binding site" evidence="1">
    <location>
        <position position="191"/>
    </location>
    <ligand>
        <name>NADP(+)</name>
        <dbReference type="ChEBI" id="CHEBI:58349"/>
    </ligand>
</feature>
<comment type="function">
    <text evidence="1">Catalyzes the oxidation of 5,10-methylenetetrahydrofolate to 5,10-methenyltetrahydrofolate and then the hydrolysis of 5,10-methenyltetrahydrofolate to 10-formyltetrahydrofolate.</text>
</comment>
<comment type="catalytic activity">
    <reaction evidence="1">
        <text>(6R)-5,10-methylene-5,6,7,8-tetrahydrofolate + NADP(+) = (6R)-5,10-methenyltetrahydrofolate + NADPH</text>
        <dbReference type="Rhea" id="RHEA:22812"/>
        <dbReference type="ChEBI" id="CHEBI:15636"/>
        <dbReference type="ChEBI" id="CHEBI:57455"/>
        <dbReference type="ChEBI" id="CHEBI:57783"/>
        <dbReference type="ChEBI" id="CHEBI:58349"/>
        <dbReference type="EC" id="1.5.1.5"/>
    </reaction>
</comment>
<comment type="catalytic activity">
    <reaction evidence="1">
        <text>(6R)-5,10-methenyltetrahydrofolate + H2O = (6R)-10-formyltetrahydrofolate + H(+)</text>
        <dbReference type="Rhea" id="RHEA:23700"/>
        <dbReference type="ChEBI" id="CHEBI:15377"/>
        <dbReference type="ChEBI" id="CHEBI:15378"/>
        <dbReference type="ChEBI" id="CHEBI:57455"/>
        <dbReference type="ChEBI" id="CHEBI:195366"/>
        <dbReference type="EC" id="3.5.4.9"/>
    </reaction>
</comment>
<comment type="pathway">
    <text evidence="1">One-carbon metabolism; tetrahydrofolate interconversion.</text>
</comment>
<comment type="subunit">
    <text evidence="1">Homodimer.</text>
</comment>
<comment type="similarity">
    <text evidence="1">Belongs to the tetrahydrofolate dehydrogenase/cyclohydrolase family.</text>
</comment>
<dbReference type="EC" id="1.5.1.5" evidence="1"/>
<dbReference type="EC" id="3.5.4.9" evidence="1"/>
<dbReference type="EMBL" id="CP000350">
    <property type="protein sequence ID" value="ABJ76208.1"/>
    <property type="molecule type" value="Genomic_DNA"/>
</dbReference>
<dbReference type="RefSeq" id="WP_011670405.1">
    <property type="nucleotide sequence ID" value="NC_008510.1"/>
</dbReference>
<dbReference type="SMR" id="Q04SB2"/>
<dbReference type="KEGG" id="lbj:LBJ_1651"/>
<dbReference type="HOGENOM" id="CLU_034045_2_1_12"/>
<dbReference type="UniPathway" id="UPA00193"/>
<dbReference type="Proteomes" id="UP000000656">
    <property type="component" value="Chromosome 1"/>
</dbReference>
<dbReference type="GO" id="GO:0005829">
    <property type="term" value="C:cytosol"/>
    <property type="evidence" value="ECO:0007669"/>
    <property type="project" value="TreeGrafter"/>
</dbReference>
<dbReference type="GO" id="GO:0004477">
    <property type="term" value="F:methenyltetrahydrofolate cyclohydrolase activity"/>
    <property type="evidence" value="ECO:0007669"/>
    <property type="project" value="UniProtKB-UniRule"/>
</dbReference>
<dbReference type="GO" id="GO:0004488">
    <property type="term" value="F:methylenetetrahydrofolate dehydrogenase (NADP+) activity"/>
    <property type="evidence" value="ECO:0007669"/>
    <property type="project" value="UniProtKB-UniRule"/>
</dbReference>
<dbReference type="GO" id="GO:0000105">
    <property type="term" value="P:L-histidine biosynthetic process"/>
    <property type="evidence" value="ECO:0007669"/>
    <property type="project" value="UniProtKB-KW"/>
</dbReference>
<dbReference type="GO" id="GO:0009086">
    <property type="term" value="P:methionine biosynthetic process"/>
    <property type="evidence" value="ECO:0007669"/>
    <property type="project" value="UniProtKB-KW"/>
</dbReference>
<dbReference type="GO" id="GO:0006164">
    <property type="term" value="P:purine nucleotide biosynthetic process"/>
    <property type="evidence" value="ECO:0007669"/>
    <property type="project" value="UniProtKB-KW"/>
</dbReference>
<dbReference type="GO" id="GO:0035999">
    <property type="term" value="P:tetrahydrofolate interconversion"/>
    <property type="evidence" value="ECO:0007669"/>
    <property type="project" value="UniProtKB-UniRule"/>
</dbReference>
<dbReference type="CDD" id="cd01080">
    <property type="entry name" value="NAD_bind_m-THF_DH_Cyclohyd"/>
    <property type="match status" value="1"/>
</dbReference>
<dbReference type="FunFam" id="3.40.50.720:FF:000094">
    <property type="entry name" value="Bifunctional protein FolD"/>
    <property type="match status" value="1"/>
</dbReference>
<dbReference type="FunFam" id="3.40.50.10860:FF:000005">
    <property type="entry name" value="C-1-tetrahydrofolate synthase, cytoplasmic, putative"/>
    <property type="match status" value="1"/>
</dbReference>
<dbReference type="Gene3D" id="3.40.50.10860">
    <property type="entry name" value="Leucine Dehydrogenase, chain A, domain 1"/>
    <property type="match status" value="1"/>
</dbReference>
<dbReference type="Gene3D" id="3.40.50.720">
    <property type="entry name" value="NAD(P)-binding Rossmann-like Domain"/>
    <property type="match status" value="1"/>
</dbReference>
<dbReference type="HAMAP" id="MF_01576">
    <property type="entry name" value="THF_DHG_CYH"/>
    <property type="match status" value="1"/>
</dbReference>
<dbReference type="InterPro" id="IPR046346">
    <property type="entry name" value="Aminoacid_DH-like_N_sf"/>
</dbReference>
<dbReference type="InterPro" id="IPR036291">
    <property type="entry name" value="NAD(P)-bd_dom_sf"/>
</dbReference>
<dbReference type="InterPro" id="IPR000672">
    <property type="entry name" value="THF_DH/CycHdrlase"/>
</dbReference>
<dbReference type="InterPro" id="IPR020630">
    <property type="entry name" value="THF_DH/CycHdrlase_cat_dom"/>
</dbReference>
<dbReference type="InterPro" id="IPR020867">
    <property type="entry name" value="THF_DH/CycHdrlase_CS"/>
</dbReference>
<dbReference type="InterPro" id="IPR020631">
    <property type="entry name" value="THF_DH/CycHdrlase_NAD-bd_dom"/>
</dbReference>
<dbReference type="NCBIfam" id="NF010774">
    <property type="entry name" value="PRK14177.1"/>
    <property type="match status" value="1"/>
</dbReference>
<dbReference type="PANTHER" id="PTHR48099:SF5">
    <property type="entry name" value="C-1-TETRAHYDROFOLATE SYNTHASE, CYTOPLASMIC"/>
    <property type="match status" value="1"/>
</dbReference>
<dbReference type="PANTHER" id="PTHR48099">
    <property type="entry name" value="C-1-TETRAHYDROFOLATE SYNTHASE, CYTOPLASMIC-RELATED"/>
    <property type="match status" value="1"/>
</dbReference>
<dbReference type="Pfam" id="PF00763">
    <property type="entry name" value="THF_DHG_CYH"/>
    <property type="match status" value="1"/>
</dbReference>
<dbReference type="Pfam" id="PF02882">
    <property type="entry name" value="THF_DHG_CYH_C"/>
    <property type="match status" value="1"/>
</dbReference>
<dbReference type="PRINTS" id="PR00085">
    <property type="entry name" value="THFDHDRGNASE"/>
</dbReference>
<dbReference type="SUPFAM" id="SSF53223">
    <property type="entry name" value="Aminoacid dehydrogenase-like, N-terminal domain"/>
    <property type="match status" value="1"/>
</dbReference>
<dbReference type="SUPFAM" id="SSF51735">
    <property type="entry name" value="NAD(P)-binding Rossmann-fold domains"/>
    <property type="match status" value="1"/>
</dbReference>
<dbReference type="PROSITE" id="PS00767">
    <property type="entry name" value="THF_DHG_CYH_2"/>
    <property type="match status" value="1"/>
</dbReference>
<proteinExistence type="inferred from homology"/>
<accession>Q04SB2</accession>
<sequence>MDPILLDGKKLSEKIRNEIRREIEERKTKNLRIPKLATILVGNNPASETYVSMKIKACHGVGMGSEMIRLGEQTTTEELLSVIDKLNADPNVDGILLQHPSPSQIDERAAFDRISFRKDVDGVTTLSFGKLSMGVETYLPCTPYGIVLLLKEHGINVSGKNAVVVGRSPILGKPMAMLLTEMNATVTLCHSKTQNLPEIVRLADIVVGAVGKPEFIKADWISKGAVLLDAGYNPGNVGDIEISKAKNHSSFYTPVPGGVGPMTIAVLLLQTLYSSKEHFTPPVQ</sequence>
<evidence type="ECO:0000255" key="1">
    <source>
        <dbReference type="HAMAP-Rule" id="MF_01576"/>
    </source>
</evidence>
<protein>
    <recommendedName>
        <fullName evidence="1">Bifunctional protein FolD</fullName>
    </recommendedName>
    <domain>
        <recommendedName>
            <fullName evidence="1">Methylenetetrahydrofolate dehydrogenase</fullName>
            <ecNumber evidence="1">1.5.1.5</ecNumber>
        </recommendedName>
    </domain>
    <domain>
        <recommendedName>
            <fullName evidence="1">Methenyltetrahydrofolate cyclohydrolase</fullName>
            <ecNumber evidence="1">3.5.4.9</ecNumber>
        </recommendedName>
    </domain>
</protein>
<gene>
    <name evidence="1" type="primary">folD</name>
    <name type="ordered locus">LBJ_1651</name>
</gene>
<keyword id="KW-0028">Amino-acid biosynthesis</keyword>
<keyword id="KW-0368">Histidine biosynthesis</keyword>
<keyword id="KW-0378">Hydrolase</keyword>
<keyword id="KW-0486">Methionine biosynthesis</keyword>
<keyword id="KW-0511">Multifunctional enzyme</keyword>
<keyword id="KW-0521">NADP</keyword>
<keyword id="KW-0554">One-carbon metabolism</keyword>
<keyword id="KW-0560">Oxidoreductase</keyword>
<keyword id="KW-0658">Purine biosynthesis</keyword>
<reference key="1">
    <citation type="journal article" date="2006" name="Proc. Natl. Acad. Sci. U.S.A.">
        <title>Genome reduction in Leptospira borgpetersenii reflects limited transmission potential.</title>
        <authorList>
            <person name="Bulach D.M."/>
            <person name="Zuerner R.L."/>
            <person name="Wilson P."/>
            <person name="Seemann T."/>
            <person name="McGrath A."/>
            <person name="Cullen P.A."/>
            <person name="Davis J."/>
            <person name="Johnson M."/>
            <person name="Kuczek E."/>
            <person name="Alt D.P."/>
            <person name="Peterson-Burch B."/>
            <person name="Coppel R.L."/>
            <person name="Rood J.I."/>
            <person name="Davies J.K."/>
            <person name="Adler B."/>
        </authorList>
    </citation>
    <scope>NUCLEOTIDE SEQUENCE [LARGE SCALE GENOMIC DNA]</scope>
    <source>
        <strain>JB197</strain>
    </source>
</reference>